<gene>
    <name evidence="1" type="primary">astA</name>
    <name type="ordered locus">Ent638_1697</name>
</gene>
<proteinExistence type="inferred from homology"/>
<dbReference type="EC" id="2.3.1.109" evidence="1"/>
<dbReference type="EMBL" id="CP000653">
    <property type="protein sequence ID" value="ABP60376.1"/>
    <property type="molecule type" value="Genomic_DNA"/>
</dbReference>
<dbReference type="RefSeq" id="WP_012017092.1">
    <property type="nucleotide sequence ID" value="NC_009436.1"/>
</dbReference>
<dbReference type="SMR" id="A4W9J6"/>
<dbReference type="STRING" id="399742.Ent638_1697"/>
<dbReference type="KEGG" id="ent:Ent638_1697"/>
<dbReference type="eggNOG" id="COG3138">
    <property type="taxonomic scope" value="Bacteria"/>
</dbReference>
<dbReference type="HOGENOM" id="CLU_057655_0_0_6"/>
<dbReference type="OrthoDB" id="21121at2"/>
<dbReference type="UniPathway" id="UPA00185">
    <property type="reaction ID" value="UER00279"/>
</dbReference>
<dbReference type="Proteomes" id="UP000000230">
    <property type="component" value="Chromosome"/>
</dbReference>
<dbReference type="GO" id="GO:0008791">
    <property type="term" value="F:arginine N-succinyltransferase activity"/>
    <property type="evidence" value="ECO:0007669"/>
    <property type="project" value="UniProtKB-UniRule"/>
</dbReference>
<dbReference type="GO" id="GO:0019544">
    <property type="term" value="P:arginine catabolic process to glutamate"/>
    <property type="evidence" value="ECO:0007669"/>
    <property type="project" value="UniProtKB-UniRule"/>
</dbReference>
<dbReference type="GO" id="GO:0019545">
    <property type="term" value="P:arginine catabolic process to succinate"/>
    <property type="evidence" value="ECO:0007669"/>
    <property type="project" value="UniProtKB-UniRule"/>
</dbReference>
<dbReference type="Gene3D" id="2.40.40.20">
    <property type="match status" value="1"/>
</dbReference>
<dbReference type="Gene3D" id="3.40.630.30">
    <property type="match status" value="1"/>
</dbReference>
<dbReference type="HAMAP" id="MF_01171">
    <property type="entry name" value="AstA"/>
    <property type="match status" value="1"/>
</dbReference>
<dbReference type="InterPro" id="IPR016181">
    <property type="entry name" value="Acyl_CoA_acyltransferase"/>
</dbReference>
<dbReference type="InterPro" id="IPR007041">
    <property type="entry name" value="Arg_succinylTrfase_AstA/AruG"/>
</dbReference>
<dbReference type="InterPro" id="IPR017650">
    <property type="entry name" value="Arginine_N-succinylTrfase"/>
</dbReference>
<dbReference type="NCBIfam" id="TIGR03243">
    <property type="entry name" value="arg_catab_AOST"/>
    <property type="match status" value="1"/>
</dbReference>
<dbReference type="NCBIfam" id="TIGR03244">
    <property type="entry name" value="arg_catab_AstA"/>
    <property type="match status" value="1"/>
</dbReference>
<dbReference type="NCBIfam" id="NF007770">
    <property type="entry name" value="PRK10456.1"/>
    <property type="match status" value="1"/>
</dbReference>
<dbReference type="PANTHER" id="PTHR30420:SF1">
    <property type="entry name" value="ARGININE N-SUCCINYLTRANSFERASE"/>
    <property type="match status" value="1"/>
</dbReference>
<dbReference type="PANTHER" id="PTHR30420">
    <property type="entry name" value="N-SUCCINYLARGININE DIHYDROLASE"/>
    <property type="match status" value="1"/>
</dbReference>
<dbReference type="Pfam" id="PF04958">
    <property type="entry name" value="AstA"/>
    <property type="match status" value="1"/>
</dbReference>
<dbReference type="SUPFAM" id="SSF55729">
    <property type="entry name" value="Acyl-CoA N-acyltransferases (Nat)"/>
    <property type="match status" value="1"/>
</dbReference>
<organism>
    <name type="scientific">Enterobacter sp. (strain 638)</name>
    <dbReference type="NCBI Taxonomy" id="399742"/>
    <lineage>
        <taxon>Bacteria</taxon>
        <taxon>Pseudomonadati</taxon>
        <taxon>Pseudomonadota</taxon>
        <taxon>Gammaproteobacteria</taxon>
        <taxon>Enterobacterales</taxon>
        <taxon>Enterobacteriaceae</taxon>
        <taxon>Enterobacter</taxon>
    </lineage>
</organism>
<accession>A4W9J6</accession>
<name>ASTA_ENT38</name>
<keyword id="KW-0012">Acyltransferase</keyword>
<keyword id="KW-0056">Arginine metabolism</keyword>
<keyword id="KW-0808">Transferase</keyword>
<evidence type="ECO:0000255" key="1">
    <source>
        <dbReference type="HAMAP-Rule" id="MF_01171"/>
    </source>
</evidence>
<reference key="1">
    <citation type="journal article" date="2010" name="PLoS Genet.">
        <title>Genome sequence of the plant growth promoting endophytic bacterium Enterobacter sp. 638.</title>
        <authorList>
            <person name="Taghavi S."/>
            <person name="van der Lelie D."/>
            <person name="Hoffman A."/>
            <person name="Zhang Y.B."/>
            <person name="Walla M.D."/>
            <person name="Vangronsveld J."/>
            <person name="Newman L."/>
            <person name="Monchy S."/>
        </authorList>
    </citation>
    <scope>NUCLEOTIDE SEQUENCE [LARGE SCALE GENOMIC DNA]</scope>
    <source>
        <strain>638</strain>
    </source>
</reference>
<comment type="function">
    <text evidence="1">Catalyzes the transfer of succinyl-CoA to arginine to produce N(2)-succinylarginine.</text>
</comment>
<comment type="catalytic activity">
    <reaction evidence="1">
        <text>succinyl-CoA + L-arginine = N(2)-succinyl-L-arginine + CoA + H(+)</text>
        <dbReference type="Rhea" id="RHEA:15185"/>
        <dbReference type="ChEBI" id="CHEBI:15378"/>
        <dbReference type="ChEBI" id="CHEBI:32682"/>
        <dbReference type="ChEBI" id="CHEBI:57287"/>
        <dbReference type="ChEBI" id="CHEBI:57292"/>
        <dbReference type="ChEBI" id="CHEBI:58241"/>
        <dbReference type="EC" id="2.3.1.109"/>
    </reaction>
</comment>
<comment type="pathway">
    <text evidence="1">Amino-acid degradation; L-arginine degradation via AST pathway; L-glutamate and succinate from L-arginine: step 1/5.</text>
</comment>
<comment type="similarity">
    <text evidence="1">Belongs to the arginine N-succinyltransferase family.</text>
</comment>
<sequence>MMVIRPVERGDLAGLMQLAGKTGGGLTSLPADEKTLSSRIDRALQTWQGTLPKSEQGYVFVLEESDTGTVVGICAIEVAVGLNDPWYNYRVGTLVHASKELNVYNALPTLFLSNDHTGSSELCTLFLDPDWRKEGNGYLLSKSRFMFMAAFRDRFNEKVVAEMRGVIDETGYSPFWESLGERFFSMEFSRADYLCGTGQKAFIAELMPKHPIYTDFLSPQAQAVIGQVHPQTAPARAVLEKEGFRYHNYVDIFDGGPTLECDVDRVRAIRKSRLVTVAEGQPAPGEWPACLVANEQYDQFRAMLIHTNPTCERLVLTAAQLDVLKCNAGDTVRLVRLCPEEKTA</sequence>
<feature type="chain" id="PRO_1000065709" description="Arginine N-succinyltransferase">
    <location>
        <begin position="1"/>
        <end position="344"/>
    </location>
</feature>
<feature type="active site" description="Proton donor" evidence="1">
    <location>
        <position position="229"/>
    </location>
</feature>
<feature type="binding site" evidence="1">
    <location>
        <position position="125"/>
    </location>
    <ligand>
        <name>succinyl-CoA</name>
        <dbReference type="ChEBI" id="CHEBI:57292"/>
    </ligand>
</feature>
<protein>
    <recommendedName>
        <fullName evidence="1">Arginine N-succinyltransferase</fullName>
        <shortName evidence="1">AST</shortName>
        <ecNumber evidence="1">2.3.1.109</ecNumber>
    </recommendedName>
    <alternativeName>
        <fullName evidence="1">AOST</fullName>
    </alternativeName>
</protein>